<comment type="function">
    <text evidence="1">Serine/threonine kinase which acts as an essential component of the MAP kinase signal transduction pathway. MAPK12 is one of the four p38 MAPKs which play an important role in the cascades of cellular responses evoked by extracellular stimuli such as pro-inflammatory cytokines or physical stress leading to direct activation of transcription factors. Accordingly, p38 MAPKs phosphorylate a broad range of proteins and it has been estimated that they may have approximately 200 to 300 substrates each. Some of the targets are downstream kinases such as MAPKAPK2, which are activated through phosphorylation and further phosphorylate additional targets (By similarity).</text>
</comment>
<comment type="catalytic activity">
    <reaction evidence="2">
        <text>L-seryl-[protein] + ATP = O-phospho-L-seryl-[protein] + ADP + H(+)</text>
        <dbReference type="Rhea" id="RHEA:17989"/>
        <dbReference type="Rhea" id="RHEA-COMP:9863"/>
        <dbReference type="Rhea" id="RHEA-COMP:11604"/>
        <dbReference type="ChEBI" id="CHEBI:15378"/>
        <dbReference type="ChEBI" id="CHEBI:29999"/>
        <dbReference type="ChEBI" id="CHEBI:30616"/>
        <dbReference type="ChEBI" id="CHEBI:83421"/>
        <dbReference type="ChEBI" id="CHEBI:456216"/>
        <dbReference type="EC" id="2.7.11.24"/>
    </reaction>
</comment>
<comment type="catalytic activity">
    <reaction evidence="2">
        <text>L-threonyl-[protein] + ATP = O-phospho-L-threonyl-[protein] + ADP + H(+)</text>
        <dbReference type="Rhea" id="RHEA:46608"/>
        <dbReference type="Rhea" id="RHEA-COMP:11060"/>
        <dbReference type="Rhea" id="RHEA-COMP:11605"/>
        <dbReference type="ChEBI" id="CHEBI:15378"/>
        <dbReference type="ChEBI" id="CHEBI:30013"/>
        <dbReference type="ChEBI" id="CHEBI:30616"/>
        <dbReference type="ChEBI" id="CHEBI:61977"/>
        <dbReference type="ChEBI" id="CHEBI:456216"/>
        <dbReference type="EC" id="2.7.11.24"/>
    </reaction>
</comment>
<comment type="cofactor">
    <cofactor evidence="2">
        <name>Mg(2+)</name>
        <dbReference type="ChEBI" id="CHEBI:18420"/>
    </cofactor>
</comment>
<comment type="activity regulation">
    <text evidence="2">Activated by threonine and tyrosine phosphorylation.</text>
</comment>
<comment type="subcellular location">
    <subcellularLocation>
        <location evidence="1">Cytoplasm</location>
    </subcellularLocation>
</comment>
<comment type="domain">
    <text>The TXY motif contains the threonine and tyrosine residues whose phosphorylation activates the MAP kinases.</text>
</comment>
<comment type="PTM">
    <text evidence="1">Dually phosphorylated on Thr-181 and Tyr-183, which activates the enzyme.</text>
</comment>
<comment type="similarity">
    <text evidence="4">Belongs to the protein kinase superfamily. CMGC Ser/Thr protein kinase family. MAP kinase subfamily.</text>
</comment>
<dbReference type="EC" id="2.7.11.24"/>
<dbReference type="EMBL" id="Y15075">
    <property type="protein sequence ID" value="CAA75355.1"/>
    <property type="molecule type" value="mRNA"/>
</dbReference>
<dbReference type="SMR" id="O42376"/>
<dbReference type="FunCoup" id="O42376">
    <property type="interactions" value="91"/>
</dbReference>
<dbReference type="STRING" id="7955.ENSDARP00000011298"/>
<dbReference type="PaxDb" id="7955-ENSDARP00000011298"/>
<dbReference type="Ensembl" id="ENSDART00000018502">
    <property type="protein sequence ID" value="ENSDARP00000011298"/>
    <property type="gene ID" value="ENSDARG00000042021"/>
</dbReference>
<dbReference type="AGR" id="ZFIN:ZDB-GENE-990415-257"/>
<dbReference type="ZFIN" id="ZDB-GENE-990415-257">
    <property type="gene designation" value="mapk12a"/>
</dbReference>
<dbReference type="eggNOG" id="KOG0660">
    <property type="taxonomic scope" value="Eukaryota"/>
</dbReference>
<dbReference type="HOGENOM" id="CLU_000288_181_1_1"/>
<dbReference type="InParanoid" id="O42376"/>
<dbReference type="OMA" id="YFSEFRD"/>
<dbReference type="PhylomeDB" id="O42376"/>
<dbReference type="TreeFam" id="TF105100"/>
<dbReference type="PRO" id="PR:O42376"/>
<dbReference type="Proteomes" id="UP000000437">
    <property type="component" value="Unplaced"/>
</dbReference>
<dbReference type="Bgee" id="ENSDARG00000042021">
    <property type="expression patterns" value="Expressed in zone of skin and 36 other cell types or tissues"/>
</dbReference>
<dbReference type="ExpressionAtlas" id="O42376">
    <property type="expression patterns" value="baseline"/>
</dbReference>
<dbReference type="GO" id="GO:0005737">
    <property type="term" value="C:cytoplasm"/>
    <property type="evidence" value="ECO:0000318"/>
    <property type="project" value="GO_Central"/>
</dbReference>
<dbReference type="GO" id="GO:0005634">
    <property type="term" value="C:nucleus"/>
    <property type="evidence" value="ECO:0000318"/>
    <property type="project" value="GO_Central"/>
</dbReference>
<dbReference type="GO" id="GO:0005524">
    <property type="term" value="F:ATP binding"/>
    <property type="evidence" value="ECO:0007669"/>
    <property type="project" value="UniProtKB-KW"/>
</dbReference>
<dbReference type="GO" id="GO:0004707">
    <property type="term" value="F:MAP kinase activity"/>
    <property type="evidence" value="ECO:0007669"/>
    <property type="project" value="UniProtKB-EC"/>
</dbReference>
<dbReference type="GO" id="GO:0106310">
    <property type="term" value="F:protein serine kinase activity"/>
    <property type="evidence" value="ECO:0007669"/>
    <property type="project" value="RHEA"/>
</dbReference>
<dbReference type="GO" id="GO:0004674">
    <property type="term" value="F:protein serine/threonine kinase activity"/>
    <property type="evidence" value="ECO:0000318"/>
    <property type="project" value="GO_Central"/>
</dbReference>
<dbReference type="GO" id="GO:0035556">
    <property type="term" value="P:intracellular signal transduction"/>
    <property type="evidence" value="ECO:0000318"/>
    <property type="project" value="GO_Central"/>
</dbReference>
<dbReference type="FunFam" id="1.10.510.10:FF:000170">
    <property type="entry name" value="Mitogen-activated protein kinase"/>
    <property type="match status" value="1"/>
</dbReference>
<dbReference type="FunFam" id="3.30.200.20:FF:000769">
    <property type="entry name" value="Mitogen-activated protein kinase 14"/>
    <property type="match status" value="1"/>
</dbReference>
<dbReference type="Gene3D" id="3.30.200.20">
    <property type="entry name" value="Phosphorylase Kinase, domain 1"/>
    <property type="match status" value="1"/>
</dbReference>
<dbReference type="Gene3D" id="1.10.510.10">
    <property type="entry name" value="Transferase(Phosphotransferase) domain 1"/>
    <property type="match status" value="1"/>
</dbReference>
<dbReference type="InterPro" id="IPR011009">
    <property type="entry name" value="Kinase-like_dom_sf"/>
</dbReference>
<dbReference type="InterPro" id="IPR050117">
    <property type="entry name" value="MAP_kinase"/>
</dbReference>
<dbReference type="InterPro" id="IPR003527">
    <property type="entry name" value="MAP_kinase_CS"/>
</dbReference>
<dbReference type="InterPro" id="IPR008352">
    <property type="entry name" value="MAPK_p38-like"/>
</dbReference>
<dbReference type="InterPro" id="IPR000719">
    <property type="entry name" value="Prot_kinase_dom"/>
</dbReference>
<dbReference type="InterPro" id="IPR017441">
    <property type="entry name" value="Protein_kinase_ATP_BS"/>
</dbReference>
<dbReference type="PANTHER" id="PTHR24055">
    <property type="entry name" value="MITOGEN-ACTIVATED PROTEIN KINASE"/>
    <property type="match status" value="1"/>
</dbReference>
<dbReference type="Pfam" id="PF00069">
    <property type="entry name" value="Pkinase"/>
    <property type="match status" value="1"/>
</dbReference>
<dbReference type="PRINTS" id="PR01773">
    <property type="entry name" value="P38MAPKINASE"/>
</dbReference>
<dbReference type="SMART" id="SM00220">
    <property type="entry name" value="S_TKc"/>
    <property type="match status" value="1"/>
</dbReference>
<dbReference type="SUPFAM" id="SSF56112">
    <property type="entry name" value="Protein kinase-like (PK-like)"/>
    <property type="match status" value="1"/>
</dbReference>
<dbReference type="PROSITE" id="PS01351">
    <property type="entry name" value="MAPK"/>
    <property type="match status" value="1"/>
</dbReference>
<dbReference type="PROSITE" id="PS00107">
    <property type="entry name" value="PROTEIN_KINASE_ATP"/>
    <property type="match status" value="1"/>
</dbReference>
<dbReference type="PROSITE" id="PS50011">
    <property type="entry name" value="PROTEIN_KINASE_DOM"/>
    <property type="match status" value="1"/>
</dbReference>
<accession>O42376</accession>
<gene>
    <name type="primary">mapk12</name>
    <name type="synonym">sapk3</name>
</gene>
<sequence length="363" mass="41971">MTARSRPGYFRQEINKTIWEVPDRYKDLKQVGTGAYGTVCYALDRRTGAKVAIKKLHRPFQSDLFAKRAYRELRLLKHMKHDNVIGLVDVFTADLSLDRFHDFYLVMPFMGTDLGKLMKMERLSEERVQYLVYQMLKGLKYIHAAGIIHRDLKPGNLAINEECELKILDFGLARQTDSEMTGYVVTRWYRAPEVILSWMHYTQTVDIWSVGCIMAEMLLGKPLFKGHDHLDQLMEIMKVTGTPSKEFTAKLQSEDARNYVTKLPRFRKKDLRILLPNVNPQAIKVLDGMLLLDPESRITAAEALAFPFFSEFREPEEETEAPPYDHSLDEADQSLEQWKRLTFTEILTFQPAPAVAESKETAL</sequence>
<name>MK12_DANRE</name>
<keyword id="KW-0067">ATP-binding</keyword>
<keyword id="KW-0963">Cytoplasm</keyword>
<keyword id="KW-0418">Kinase</keyword>
<keyword id="KW-0547">Nucleotide-binding</keyword>
<keyword id="KW-0597">Phosphoprotein</keyword>
<keyword id="KW-1185">Reference proteome</keyword>
<keyword id="KW-0723">Serine/threonine-protein kinase</keyword>
<keyword id="KW-0346">Stress response</keyword>
<keyword id="KW-0804">Transcription</keyword>
<keyword id="KW-0805">Transcription regulation</keyword>
<keyword id="KW-0808">Transferase</keyword>
<proteinExistence type="evidence at transcript level"/>
<organism evidence="5">
    <name type="scientific">Danio rerio</name>
    <name type="common">Zebrafish</name>
    <name type="synonym">Brachydanio rerio</name>
    <dbReference type="NCBI Taxonomy" id="7955"/>
    <lineage>
        <taxon>Eukaryota</taxon>
        <taxon>Metazoa</taxon>
        <taxon>Chordata</taxon>
        <taxon>Craniata</taxon>
        <taxon>Vertebrata</taxon>
        <taxon>Euteleostomi</taxon>
        <taxon>Actinopterygii</taxon>
        <taxon>Neopterygii</taxon>
        <taxon>Teleostei</taxon>
        <taxon>Ostariophysi</taxon>
        <taxon>Cypriniformes</taxon>
        <taxon>Danionidae</taxon>
        <taxon>Danioninae</taxon>
        <taxon>Danio</taxon>
    </lineage>
</organism>
<protein>
    <recommendedName>
        <fullName>Mitogen-activated protein kinase 12</fullName>
        <shortName>MAP kinase 12</shortName>
        <shortName>MAPK 12</shortName>
        <ecNumber>2.7.11.24</ecNumber>
    </recommendedName>
    <alternativeName>
        <fullName>Stress-activated protein kinase 3</fullName>
    </alternativeName>
</protein>
<feature type="chain" id="PRO_0000186285" description="Mitogen-activated protein kinase 12">
    <location>
        <begin position="1"/>
        <end position="363"/>
    </location>
</feature>
<feature type="domain" description="Protein kinase" evidence="3">
    <location>
        <begin position="25"/>
        <end position="309"/>
    </location>
</feature>
<feature type="short sequence motif" description="TXY">
    <location>
        <begin position="181"/>
        <end position="183"/>
    </location>
</feature>
<feature type="active site" description="Proton acceptor" evidence="3">
    <location>
        <position position="151"/>
    </location>
</feature>
<feature type="binding site" evidence="3">
    <location>
        <begin position="31"/>
        <end position="39"/>
    </location>
    <ligand>
        <name>ATP</name>
        <dbReference type="ChEBI" id="CHEBI:30616"/>
    </ligand>
</feature>
<feature type="binding site" evidence="3">
    <location>
        <position position="54"/>
    </location>
    <ligand>
        <name>ATP</name>
        <dbReference type="ChEBI" id="CHEBI:30616"/>
    </ligand>
</feature>
<feature type="modified residue" description="Phosphothreonine" evidence="1">
    <location>
        <position position="181"/>
    </location>
</feature>
<feature type="modified residue" description="Phosphotyrosine" evidence="1">
    <location>
        <position position="183"/>
    </location>
</feature>
<reference evidence="4" key="1">
    <citation type="submission" date="1997-10" db="EMBL/GenBank/DDBJ databases">
        <authorList>
            <person name="Goedert M."/>
        </authorList>
    </citation>
    <scope>NUCLEOTIDE SEQUENCE [MRNA]</scope>
    <source>
        <tissue>Somatic embryo</tissue>
    </source>
</reference>
<evidence type="ECO:0000250" key="1"/>
<evidence type="ECO:0000250" key="2">
    <source>
        <dbReference type="UniProtKB" id="Q63538"/>
    </source>
</evidence>
<evidence type="ECO:0000255" key="3">
    <source>
        <dbReference type="PROSITE-ProRule" id="PRU00159"/>
    </source>
</evidence>
<evidence type="ECO:0000305" key="4"/>
<evidence type="ECO:0000312" key="5">
    <source>
        <dbReference type="EMBL" id="CAA75355.1"/>
    </source>
</evidence>